<keyword id="KW-0378">Hydrolase</keyword>
<keyword id="KW-0408">Iron</keyword>
<keyword id="KW-0479">Metal-binding</keyword>
<keyword id="KW-0648">Protein biosynthesis</keyword>
<dbReference type="EC" id="3.5.1.88" evidence="1"/>
<dbReference type="EMBL" id="CP000964">
    <property type="protein sequence ID" value="ACI10925.1"/>
    <property type="molecule type" value="Genomic_DNA"/>
</dbReference>
<dbReference type="SMR" id="B5XNC4"/>
<dbReference type="KEGG" id="kpe:KPK_0429"/>
<dbReference type="HOGENOM" id="CLU_061901_2_1_6"/>
<dbReference type="Proteomes" id="UP000001734">
    <property type="component" value="Chromosome"/>
</dbReference>
<dbReference type="GO" id="GO:0046872">
    <property type="term" value="F:metal ion binding"/>
    <property type="evidence" value="ECO:0007669"/>
    <property type="project" value="UniProtKB-KW"/>
</dbReference>
<dbReference type="GO" id="GO:0042586">
    <property type="term" value="F:peptide deformylase activity"/>
    <property type="evidence" value="ECO:0007669"/>
    <property type="project" value="UniProtKB-UniRule"/>
</dbReference>
<dbReference type="GO" id="GO:0043686">
    <property type="term" value="P:co-translational protein modification"/>
    <property type="evidence" value="ECO:0007669"/>
    <property type="project" value="TreeGrafter"/>
</dbReference>
<dbReference type="GO" id="GO:0006412">
    <property type="term" value="P:translation"/>
    <property type="evidence" value="ECO:0007669"/>
    <property type="project" value="UniProtKB-UniRule"/>
</dbReference>
<dbReference type="CDD" id="cd00487">
    <property type="entry name" value="Pep_deformylase"/>
    <property type="match status" value="1"/>
</dbReference>
<dbReference type="FunFam" id="3.90.45.10:FF:000001">
    <property type="entry name" value="Peptide deformylase"/>
    <property type="match status" value="1"/>
</dbReference>
<dbReference type="Gene3D" id="3.90.45.10">
    <property type="entry name" value="Peptide deformylase"/>
    <property type="match status" value="1"/>
</dbReference>
<dbReference type="HAMAP" id="MF_00163">
    <property type="entry name" value="Pep_deformylase"/>
    <property type="match status" value="1"/>
</dbReference>
<dbReference type="InterPro" id="IPR023635">
    <property type="entry name" value="Peptide_deformylase"/>
</dbReference>
<dbReference type="InterPro" id="IPR036821">
    <property type="entry name" value="Peptide_deformylase_sf"/>
</dbReference>
<dbReference type="NCBIfam" id="TIGR00079">
    <property type="entry name" value="pept_deformyl"/>
    <property type="match status" value="1"/>
</dbReference>
<dbReference type="NCBIfam" id="NF001159">
    <property type="entry name" value="PRK00150.1-3"/>
    <property type="match status" value="1"/>
</dbReference>
<dbReference type="PANTHER" id="PTHR10458">
    <property type="entry name" value="PEPTIDE DEFORMYLASE"/>
    <property type="match status" value="1"/>
</dbReference>
<dbReference type="PANTHER" id="PTHR10458:SF21">
    <property type="entry name" value="PEPTIDE DEFORMYLASE"/>
    <property type="match status" value="1"/>
</dbReference>
<dbReference type="Pfam" id="PF01327">
    <property type="entry name" value="Pep_deformylase"/>
    <property type="match status" value="1"/>
</dbReference>
<dbReference type="PIRSF" id="PIRSF004749">
    <property type="entry name" value="Pep_def"/>
    <property type="match status" value="1"/>
</dbReference>
<dbReference type="PRINTS" id="PR01576">
    <property type="entry name" value="PDEFORMYLASE"/>
</dbReference>
<dbReference type="SUPFAM" id="SSF56420">
    <property type="entry name" value="Peptide deformylase"/>
    <property type="match status" value="1"/>
</dbReference>
<comment type="function">
    <text evidence="1">Removes the formyl group from the N-terminal Met of newly synthesized proteins. Requires at least a dipeptide for an efficient rate of reaction. N-terminal L-methionine is a prerequisite for activity but the enzyme has broad specificity at other positions.</text>
</comment>
<comment type="catalytic activity">
    <reaction evidence="1">
        <text>N-terminal N-formyl-L-methionyl-[peptide] + H2O = N-terminal L-methionyl-[peptide] + formate</text>
        <dbReference type="Rhea" id="RHEA:24420"/>
        <dbReference type="Rhea" id="RHEA-COMP:10639"/>
        <dbReference type="Rhea" id="RHEA-COMP:10640"/>
        <dbReference type="ChEBI" id="CHEBI:15377"/>
        <dbReference type="ChEBI" id="CHEBI:15740"/>
        <dbReference type="ChEBI" id="CHEBI:49298"/>
        <dbReference type="ChEBI" id="CHEBI:64731"/>
        <dbReference type="EC" id="3.5.1.88"/>
    </reaction>
</comment>
<comment type="cofactor">
    <cofactor evidence="1">
        <name>Fe(2+)</name>
        <dbReference type="ChEBI" id="CHEBI:29033"/>
    </cofactor>
    <text evidence="1">Binds 1 Fe(2+) ion.</text>
</comment>
<comment type="similarity">
    <text evidence="1">Belongs to the polypeptide deformylase family.</text>
</comment>
<name>DEF_KLEP3</name>
<evidence type="ECO:0000255" key="1">
    <source>
        <dbReference type="HAMAP-Rule" id="MF_00163"/>
    </source>
</evidence>
<gene>
    <name evidence="1" type="primary">def</name>
    <name type="ordered locus">KPK_0429</name>
</gene>
<organism>
    <name type="scientific">Klebsiella pneumoniae (strain 342)</name>
    <dbReference type="NCBI Taxonomy" id="507522"/>
    <lineage>
        <taxon>Bacteria</taxon>
        <taxon>Pseudomonadati</taxon>
        <taxon>Pseudomonadota</taxon>
        <taxon>Gammaproteobacteria</taxon>
        <taxon>Enterobacterales</taxon>
        <taxon>Enterobacteriaceae</taxon>
        <taxon>Klebsiella/Raoultella group</taxon>
        <taxon>Klebsiella</taxon>
        <taxon>Klebsiella pneumoniae complex</taxon>
    </lineage>
</organism>
<proteinExistence type="inferred from homology"/>
<feature type="chain" id="PRO_1000097317" description="Peptide deformylase">
    <location>
        <begin position="1"/>
        <end position="169"/>
    </location>
</feature>
<feature type="active site" evidence="1">
    <location>
        <position position="134"/>
    </location>
</feature>
<feature type="binding site" evidence="1">
    <location>
        <position position="91"/>
    </location>
    <ligand>
        <name>Fe cation</name>
        <dbReference type="ChEBI" id="CHEBI:24875"/>
    </ligand>
</feature>
<feature type="binding site" evidence="1">
    <location>
        <position position="133"/>
    </location>
    <ligand>
        <name>Fe cation</name>
        <dbReference type="ChEBI" id="CHEBI:24875"/>
    </ligand>
</feature>
<feature type="binding site" evidence="1">
    <location>
        <position position="137"/>
    </location>
    <ligand>
        <name>Fe cation</name>
        <dbReference type="ChEBI" id="CHEBI:24875"/>
    </ligand>
</feature>
<accession>B5XNC4</accession>
<reference key="1">
    <citation type="journal article" date="2008" name="PLoS Genet.">
        <title>Complete genome sequence of the N2-fixing broad host range endophyte Klebsiella pneumoniae 342 and virulence predictions verified in mice.</title>
        <authorList>
            <person name="Fouts D.E."/>
            <person name="Tyler H.L."/>
            <person name="DeBoy R.T."/>
            <person name="Daugherty S."/>
            <person name="Ren Q."/>
            <person name="Badger J.H."/>
            <person name="Durkin A.S."/>
            <person name="Huot H."/>
            <person name="Shrivastava S."/>
            <person name="Kothari S."/>
            <person name="Dodson R.J."/>
            <person name="Mohamoud Y."/>
            <person name="Khouri H."/>
            <person name="Roesch L.F.W."/>
            <person name="Krogfelt K.A."/>
            <person name="Struve C."/>
            <person name="Triplett E.W."/>
            <person name="Methe B.A."/>
        </authorList>
    </citation>
    <scope>NUCLEOTIDE SEQUENCE [LARGE SCALE GENOMIC DNA]</scope>
    <source>
        <strain>342</strain>
    </source>
</reference>
<protein>
    <recommendedName>
        <fullName evidence="1">Peptide deformylase</fullName>
        <shortName evidence="1">PDF</shortName>
        <ecNumber evidence="1">3.5.1.88</ecNumber>
    </recommendedName>
    <alternativeName>
        <fullName evidence="1">Polypeptide deformylase</fullName>
    </alternativeName>
</protein>
<sequence>MAVLQVLHIPDERLRKVAEPVKEVNAEIQRIVDDMFDTMYAEEGIGLAATQVDIHQRIIVIDVSENREERLVLINPELLEKDGETGIEEGCLSIPEQRALVPRAEKVKIRALDRDGKPFELEADGLLAICIQHEMDHLVGKLFIDYLSPLKQQRIRQKVEKLDRLRSRA</sequence>